<evidence type="ECO:0000255" key="1">
    <source>
        <dbReference type="HAMAP-Rule" id="MF_00165"/>
    </source>
</evidence>
<sequence>MTPRGRFITLEGVDGAGKSTHTAWMVQALRDLGLTVLATREPGGTPVGEKLRELLLSEPMALETETLLMFAARCEHVREVIAPALARGEWVVCDRFTDASYAYQGGGRQLGAARVAALEQWVHPDLQPDRTWLFDVPLDVARARLARSRQLDRFEREEDAFFERTRAAYHERARSSDGRIRIIDSSRPLEVVRAQLDSEVRELVAQAA</sequence>
<protein>
    <recommendedName>
        <fullName evidence="1">Thymidylate kinase</fullName>
        <ecNumber evidence="1">2.7.4.9</ecNumber>
    </recommendedName>
    <alternativeName>
        <fullName evidence="1">dTMP kinase</fullName>
    </alternativeName>
</protein>
<name>KTHY_BORPA</name>
<comment type="function">
    <text evidence="1">Phosphorylation of dTMP to form dTDP in both de novo and salvage pathways of dTTP synthesis.</text>
</comment>
<comment type="catalytic activity">
    <reaction evidence="1">
        <text>dTMP + ATP = dTDP + ADP</text>
        <dbReference type="Rhea" id="RHEA:13517"/>
        <dbReference type="ChEBI" id="CHEBI:30616"/>
        <dbReference type="ChEBI" id="CHEBI:58369"/>
        <dbReference type="ChEBI" id="CHEBI:63528"/>
        <dbReference type="ChEBI" id="CHEBI:456216"/>
        <dbReference type="EC" id="2.7.4.9"/>
    </reaction>
</comment>
<comment type="similarity">
    <text evidence="1">Belongs to the thymidylate kinase family.</text>
</comment>
<feature type="chain" id="PRO_0000155244" description="Thymidylate kinase">
    <location>
        <begin position="1"/>
        <end position="208"/>
    </location>
</feature>
<feature type="binding site" evidence="1">
    <location>
        <begin position="12"/>
        <end position="19"/>
    </location>
    <ligand>
        <name>ATP</name>
        <dbReference type="ChEBI" id="CHEBI:30616"/>
    </ligand>
</feature>
<keyword id="KW-0067">ATP-binding</keyword>
<keyword id="KW-0418">Kinase</keyword>
<keyword id="KW-0545">Nucleotide biosynthesis</keyword>
<keyword id="KW-0547">Nucleotide-binding</keyword>
<keyword id="KW-0808">Transferase</keyword>
<dbReference type="EC" id="2.7.4.9" evidence="1"/>
<dbReference type="EMBL" id="BX640427">
    <property type="protein sequence ID" value="CAE36861.1"/>
    <property type="molecule type" value="Genomic_DNA"/>
</dbReference>
<dbReference type="RefSeq" id="WP_003811733.1">
    <property type="nucleotide sequence ID" value="NC_002928.3"/>
</dbReference>
<dbReference type="SMR" id="Q7WA31"/>
<dbReference type="GeneID" id="93203318"/>
<dbReference type="KEGG" id="bpa:BPP1559"/>
<dbReference type="HOGENOM" id="CLU_049131_0_2_4"/>
<dbReference type="Proteomes" id="UP000001421">
    <property type="component" value="Chromosome"/>
</dbReference>
<dbReference type="GO" id="GO:0005829">
    <property type="term" value="C:cytosol"/>
    <property type="evidence" value="ECO:0007669"/>
    <property type="project" value="TreeGrafter"/>
</dbReference>
<dbReference type="GO" id="GO:0005524">
    <property type="term" value="F:ATP binding"/>
    <property type="evidence" value="ECO:0007669"/>
    <property type="project" value="UniProtKB-UniRule"/>
</dbReference>
<dbReference type="GO" id="GO:0004798">
    <property type="term" value="F:dTMP kinase activity"/>
    <property type="evidence" value="ECO:0007669"/>
    <property type="project" value="UniProtKB-UniRule"/>
</dbReference>
<dbReference type="GO" id="GO:0006233">
    <property type="term" value="P:dTDP biosynthetic process"/>
    <property type="evidence" value="ECO:0007669"/>
    <property type="project" value="InterPro"/>
</dbReference>
<dbReference type="GO" id="GO:0006235">
    <property type="term" value="P:dTTP biosynthetic process"/>
    <property type="evidence" value="ECO:0007669"/>
    <property type="project" value="UniProtKB-UniRule"/>
</dbReference>
<dbReference type="GO" id="GO:0006227">
    <property type="term" value="P:dUDP biosynthetic process"/>
    <property type="evidence" value="ECO:0007669"/>
    <property type="project" value="TreeGrafter"/>
</dbReference>
<dbReference type="CDD" id="cd01672">
    <property type="entry name" value="TMPK"/>
    <property type="match status" value="1"/>
</dbReference>
<dbReference type="FunFam" id="3.40.50.300:FF:000225">
    <property type="entry name" value="Thymidylate kinase"/>
    <property type="match status" value="1"/>
</dbReference>
<dbReference type="Gene3D" id="3.40.50.300">
    <property type="entry name" value="P-loop containing nucleotide triphosphate hydrolases"/>
    <property type="match status" value="1"/>
</dbReference>
<dbReference type="HAMAP" id="MF_00165">
    <property type="entry name" value="Thymidylate_kinase"/>
    <property type="match status" value="1"/>
</dbReference>
<dbReference type="InterPro" id="IPR027417">
    <property type="entry name" value="P-loop_NTPase"/>
</dbReference>
<dbReference type="InterPro" id="IPR039430">
    <property type="entry name" value="Thymidylate_kin-like_dom"/>
</dbReference>
<dbReference type="InterPro" id="IPR018094">
    <property type="entry name" value="Thymidylate_kinase"/>
</dbReference>
<dbReference type="NCBIfam" id="TIGR00041">
    <property type="entry name" value="DTMP_kinase"/>
    <property type="match status" value="1"/>
</dbReference>
<dbReference type="PANTHER" id="PTHR10344">
    <property type="entry name" value="THYMIDYLATE KINASE"/>
    <property type="match status" value="1"/>
</dbReference>
<dbReference type="PANTHER" id="PTHR10344:SF4">
    <property type="entry name" value="UMP-CMP KINASE 2, MITOCHONDRIAL"/>
    <property type="match status" value="1"/>
</dbReference>
<dbReference type="Pfam" id="PF02223">
    <property type="entry name" value="Thymidylate_kin"/>
    <property type="match status" value="1"/>
</dbReference>
<dbReference type="SUPFAM" id="SSF52540">
    <property type="entry name" value="P-loop containing nucleoside triphosphate hydrolases"/>
    <property type="match status" value="1"/>
</dbReference>
<proteinExistence type="inferred from homology"/>
<gene>
    <name evidence="1" type="primary">tmk</name>
    <name type="ordered locus">BPP1559</name>
</gene>
<accession>Q7WA31</accession>
<reference key="1">
    <citation type="journal article" date="2003" name="Nat. Genet.">
        <title>Comparative analysis of the genome sequences of Bordetella pertussis, Bordetella parapertussis and Bordetella bronchiseptica.</title>
        <authorList>
            <person name="Parkhill J."/>
            <person name="Sebaihia M."/>
            <person name="Preston A."/>
            <person name="Murphy L.D."/>
            <person name="Thomson N.R."/>
            <person name="Harris D.E."/>
            <person name="Holden M.T.G."/>
            <person name="Churcher C.M."/>
            <person name="Bentley S.D."/>
            <person name="Mungall K.L."/>
            <person name="Cerdeno-Tarraga A.-M."/>
            <person name="Temple L."/>
            <person name="James K.D."/>
            <person name="Harris B."/>
            <person name="Quail M.A."/>
            <person name="Achtman M."/>
            <person name="Atkin R."/>
            <person name="Baker S."/>
            <person name="Basham D."/>
            <person name="Bason N."/>
            <person name="Cherevach I."/>
            <person name="Chillingworth T."/>
            <person name="Collins M."/>
            <person name="Cronin A."/>
            <person name="Davis P."/>
            <person name="Doggett J."/>
            <person name="Feltwell T."/>
            <person name="Goble A."/>
            <person name="Hamlin N."/>
            <person name="Hauser H."/>
            <person name="Holroyd S."/>
            <person name="Jagels K."/>
            <person name="Leather S."/>
            <person name="Moule S."/>
            <person name="Norberczak H."/>
            <person name="O'Neil S."/>
            <person name="Ormond D."/>
            <person name="Price C."/>
            <person name="Rabbinowitsch E."/>
            <person name="Rutter S."/>
            <person name="Sanders M."/>
            <person name="Saunders D."/>
            <person name="Seeger K."/>
            <person name="Sharp S."/>
            <person name="Simmonds M."/>
            <person name="Skelton J."/>
            <person name="Squares R."/>
            <person name="Squares S."/>
            <person name="Stevens K."/>
            <person name="Unwin L."/>
            <person name="Whitehead S."/>
            <person name="Barrell B.G."/>
            <person name="Maskell D.J."/>
        </authorList>
    </citation>
    <scope>NUCLEOTIDE SEQUENCE [LARGE SCALE GENOMIC DNA]</scope>
    <source>
        <strain>12822 / ATCC BAA-587 / NCTC 13253</strain>
    </source>
</reference>
<organism>
    <name type="scientific">Bordetella parapertussis (strain 12822 / ATCC BAA-587 / NCTC 13253)</name>
    <dbReference type="NCBI Taxonomy" id="257311"/>
    <lineage>
        <taxon>Bacteria</taxon>
        <taxon>Pseudomonadati</taxon>
        <taxon>Pseudomonadota</taxon>
        <taxon>Betaproteobacteria</taxon>
        <taxon>Burkholderiales</taxon>
        <taxon>Alcaligenaceae</taxon>
        <taxon>Bordetella</taxon>
    </lineage>
</organism>